<comment type="function">
    <text evidence="6">Involved in a signaling module for sexual development and cell growth under stressed conditions. Required for G1 arrest under nitrogen starvation and for growth at high temperature and osmolarity.</text>
</comment>
<comment type="catalytic activity">
    <reaction evidence="6">
        <text>L-seryl-[protein] + ATP = O-phospho-L-seryl-[protein] + ADP + H(+)</text>
        <dbReference type="Rhea" id="RHEA:17989"/>
        <dbReference type="Rhea" id="RHEA-COMP:9863"/>
        <dbReference type="Rhea" id="RHEA-COMP:11604"/>
        <dbReference type="ChEBI" id="CHEBI:15378"/>
        <dbReference type="ChEBI" id="CHEBI:29999"/>
        <dbReference type="ChEBI" id="CHEBI:30616"/>
        <dbReference type="ChEBI" id="CHEBI:83421"/>
        <dbReference type="ChEBI" id="CHEBI:456216"/>
        <dbReference type="EC" id="2.7.11.1"/>
    </reaction>
</comment>
<comment type="catalytic activity">
    <reaction evidence="6">
        <text>L-threonyl-[protein] + ATP = O-phospho-L-threonyl-[protein] + ADP + H(+)</text>
        <dbReference type="Rhea" id="RHEA:46608"/>
        <dbReference type="Rhea" id="RHEA-COMP:11060"/>
        <dbReference type="Rhea" id="RHEA-COMP:11605"/>
        <dbReference type="ChEBI" id="CHEBI:15378"/>
        <dbReference type="ChEBI" id="CHEBI:30013"/>
        <dbReference type="ChEBI" id="CHEBI:30616"/>
        <dbReference type="ChEBI" id="CHEBI:61977"/>
        <dbReference type="ChEBI" id="CHEBI:456216"/>
        <dbReference type="EC" id="2.7.11.1"/>
    </reaction>
</comment>
<comment type="PTM">
    <text evidence="6 7">Phosphorylated by ksg1 and target of rapamycin complex 2 (TORC2), affecting the kinase activity of gad8 in a nutrient-dependent manner.</text>
</comment>
<comment type="similarity">
    <text evidence="9">Belongs to the protein kinase superfamily. AGC Ser/Thr protein kinase family.</text>
</comment>
<accession>Q9P7J8</accession>
<feature type="chain" id="PRO_0000085957" description="Serine/threonine-protein kinase gad8">
    <location>
        <begin position="1"/>
        <end position="569"/>
    </location>
</feature>
<feature type="domain" description="C2" evidence="1">
    <location>
        <begin position="45"/>
        <end position="202"/>
    </location>
</feature>
<feature type="domain" description="Protein kinase" evidence="2">
    <location>
        <begin position="230"/>
        <end position="485"/>
    </location>
</feature>
<feature type="domain" description="AGC-kinase C-terminal" evidence="3">
    <location>
        <begin position="486"/>
        <end position="557"/>
    </location>
</feature>
<feature type="region of interest" description="Disordered" evidence="5">
    <location>
        <begin position="19"/>
        <end position="63"/>
    </location>
</feature>
<feature type="compositionally biased region" description="Low complexity" evidence="5">
    <location>
        <begin position="31"/>
        <end position="42"/>
    </location>
</feature>
<feature type="compositionally biased region" description="Basic and acidic residues" evidence="5">
    <location>
        <begin position="43"/>
        <end position="58"/>
    </location>
</feature>
<feature type="active site" description="Proton acceptor" evidence="2 4">
    <location>
        <position position="353"/>
    </location>
</feature>
<feature type="binding site" evidence="2">
    <location>
        <begin position="236"/>
        <end position="244"/>
    </location>
    <ligand>
        <name>ATP</name>
        <dbReference type="ChEBI" id="CHEBI:30616"/>
    </ligand>
</feature>
<feature type="binding site" evidence="2">
    <location>
        <position position="259"/>
    </location>
    <ligand>
        <name>ATP</name>
        <dbReference type="ChEBI" id="CHEBI:30616"/>
    </ligand>
</feature>
<feature type="modified residue" description="Phosphothreonine; by ksg1" evidence="6">
    <location>
        <position position="387"/>
    </location>
</feature>
<feature type="modified residue" description="Phosphoserine; by TORC2" evidence="6">
    <location>
        <position position="527"/>
    </location>
</feature>
<feature type="modified residue" description="Phosphoserine; by TORC2" evidence="6">
    <location>
        <position position="546"/>
    </location>
</feature>
<feature type="mutagenesis site" description="Sterile and no growth under stressed conditions." evidence="6">
    <original>T</original>
    <variation>A</variation>
    <location>
        <position position="387"/>
    </location>
</feature>
<feature type="mutagenesis site" description="No activity." evidence="6">
    <original>T</original>
    <variation>D</variation>
    <variation>E</variation>
    <location>
        <position position="387"/>
    </location>
</feature>
<feature type="mutagenesis site" description="Sterile and no growth under stressed conditions." evidence="6">
    <original>S</original>
    <variation>A</variation>
    <location>
        <position position="527"/>
    </location>
</feature>
<feature type="mutagenesis site" description="Function compromised." evidence="6">
    <original>S</original>
    <variation>D</variation>
    <location>
        <position position="527"/>
    </location>
</feature>
<feature type="mutagenesis site" description="Fertile and no growth defects." evidence="6">
    <original>S</original>
    <variation>A</variation>
    <location>
        <position position="546"/>
    </location>
</feature>
<feature type="mutagenesis site" description="Function compromised." evidence="6">
    <original>S</original>
    <variation>D</variation>
    <location>
        <position position="546"/>
    </location>
</feature>
<evidence type="ECO:0000255" key="1">
    <source>
        <dbReference type="PROSITE-ProRule" id="PRU00041"/>
    </source>
</evidence>
<evidence type="ECO:0000255" key="2">
    <source>
        <dbReference type="PROSITE-ProRule" id="PRU00159"/>
    </source>
</evidence>
<evidence type="ECO:0000255" key="3">
    <source>
        <dbReference type="PROSITE-ProRule" id="PRU00618"/>
    </source>
</evidence>
<evidence type="ECO:0000255" key="4">
    <source>
        <dbReference type="PROSITE-ProRule" id="PRU10027"/>
    </source>
</evidence>
<evidence type="ECO:0000256" key="5">
    <source>
        <dbReference type="SAM" id="MobiDB-lite"/>
    </source>
</evidence>
<evidence type="ECO:0000269" key="6">
    <source>
    </source>
</evidence>
<evidence type="ECO:0000269" key="7">
    <source>
    </source>
</evidence>
<evidence type="ECO:0000303" key="8">
    <source>
    </source>
</evidence>
<evidence type="ECO:0000305" key="9"/>
<evidence type="ECO:0000312" key="10">
    <source>
        <dbReference type="PomBase" id="SPCC24B10.07"/>
    </source>
</evidence>
<dbReference type="EC" id="2.7.11.1" evidence="6"/>
<dbReference type="EMBL" id="CU329672">
    <property type="protein sequence ID" value="CAB76216.1"/>
    <property type="molecule type" value="Genomic_DNA"/>
</dbReference>
<dbReference type="PIR" id="T50414">
    <property type="entry name" value="T50414"/>
</dbReference>
<dbReference type="RefSeq" id="NP_588010.1">
    <property type="nucleotide sequence ID" value="NM_001023001.2"/>
</dbReference>
<dbReference type="SMR" id="Q9P7J8"/>
<dbReference type="BioGRID" id="275776">
    <property type="interactions" value="79"/>
</dbReference>
<dbReference type="FunCoup" id="Q9P7J8">
    <property type="interactions" value="478"/>
</dbReference>
<dbReference type="STRING" id="284812.Q9P7J8"/>
<dbReference type="iPTMnet" id="Q9P7J8"/>
<dbReference type="PaxDb" id="4896-SPCC24B10.07.1"/>
<dbReference type="EnsemblFungi" id="SPCC24B10.07.1">
    <property type="protein sequence ID" value="SPCC24B10.07.1:pep"/>
    <property type="gene ID" value="SPCC24B10.07"/>
</dbReference>
<dbReference type="GeneID" id="2539206"/>
<dbReference type="KEGG" id="spo:2539206"/>
<dbReference type="PomBase" id="SPCC24B10.07">
    <property type="gene designation" value="gad8"/>
</dbReference>
<dbReference type="VEuPathDB" id="FungiDB:SPCC24B10.07"/>
<dbReference type="eggNOG" id="KOG0598">
    <property type="taxonomic scope" value="Eukaryota"/>
</dbReference>
<dbReference type="HOGENOM" id="CLU_000288_120_1_1"/>
<dbReference type="InParanoid" id="Q9P7J8"/>
<dbReference type="OMA" id="YLVMEFE"/>
<dbReference type="PhylomeDB" id="Q9P7J8"/>
<dbReference type="PRO" id="PR:Q9P7J8"/>
<dbReference type="Proteomes" id="UP000002485">
    <property type="component" value="Chromosome III"/>
</dbReference>
<dbReference type="GO" id="GO:0000785">
    <property type="term" value="C:chromatin"/>
    <property type="evidence" value="ECO:0000314"/>
    <property type="project" value="PomBase"/>
</dbReference>
<dbReference type="GO" id="GO:0005737">
    <property type="term" value="C:cytoplasm"/>
    <property type="evidence" value="ECO:0000314"/>
    <property type="project" value="CACAO"/>
</dbReference>
<dbReference type="GO" id="GO:0005634">
    <property type="term" value="C:nucleus"/>
    <property type="evidence" value="ECO:0000318"/>
    <property type="project" value="GO_Central"/>
</dbReference>
<dbReference type="GO" id="GO:0005524">
    <property type="term" value="F:ATP binding"/>
    <property type="evidence" value="ECO:0007669"/>
    <property type="project" value="UniProtKB-KW"/>
</dbReference>
<dbReference type="GO" id="GO:0008289">
    <property type="term" value="F:lipid binding"/>
    <property type="evidence" value="ECO:0000255"/>
    <property type="project" value="PomBase"/>
</dbReference>
<dbReference type="GO" id="GO:0106310">
    <property type="term" value="F:protein serine kinase activity"/>
    <property type="evidence" value="ECO:0007669"/>
    <property type="project" value="RHEA"/>
</dbReference>
<dbReference type="GO" id="GO:0004674">
    <property type="term" value="F:protein serine/threonine kinase activity"/>
    <property type="evidence" value="ECO:0000314"/>
    <property type="project" value="PomBase"/>
</dbReference>
<dbReference type="GO" id="GO:1903940">
    <property type="term" value="P:negative regulation of TORC2 signaling"/>
    <property type="evidence" value="ECO:0000315"/>
    <property type="project" value="PomBase"/>
</dbReference>
<dbReference type="GO" id="GO:0031139">
    <property type="term" value="P:positive regulation of conjugation with cellular fusion"/>
    <property type="evidence" value="ECO:0000315"/>
    <property type="project" value="PomBase"/>
</dbReference>
<dbReference type="GO" id="GO:1900237">
    <property type="term" value="P:positive regulation of induction of conjugation with cellular fusion"/>
    <property type="evidence" value="ECO:0000315"/>
    <property type="project" value="PomBase"/>
</dbReference>
<dbReference type="GO" id="GO:0045944">
    <property type="term" value="P:positive regulation of transcription by RNA polymerase II"/>
    <property type="evidence" value="ECO:0000315"/>
    <property type="project" value="PomBase"/>
</dbReference>
<dbReference type="CDD" id="cd05585">
    <property type="entry name" value="STKc_YPK1_like"/>
    <property type="match status" value="1"/>
</dbReference>
<dbReference type="CDD" id="cd11651">
    <property type="entry name" value="YPK1_N_like"/>
    <property type="match status" value="1"/>
</dbReference>
<dbReference type="FunFam" id="1.10.510.10:FF:000008">
    <property type="entry name" value="Non-specific serine/threonine protein kinase"/>
    <property type="match status" value="1"/>
</dbReference>
<dbReference type="FunFam" id="3.30.200.20:FF:000048">
    <property type="entry name" value="Non-specific serine/threonine protein kinase"/>
    <property type="match status" value="1"/>
</dbReference>
<dbReference type="Gene3D" id="2.60.40.150">
    <property type="entry name" value="C2 domain"/>
    <property type="match status" value="1"/>
</dbReference>
<dbReference type="Gene3D" id="3.30.200.20">
    <property type="entry name" value="Phosphorylase Kinase, domain 1"/>
    <property type="match status" value="1"/>
</dbReference>
<dbReference type="Gene3D" id="1.10.510.10">
    <property type="entry name" value="Transferase(Phosphotransferase) domain 1"/>
    <property type="match status" value="1"/>
</dbReference>
<dbReference type="InterPro" id="IPR000961">
    <property type="entry name" value="AGC-kinase_C"/>
</dbReference>
<dbReference type="InterPro" id="IPR000008">
    <property type="entry name" value="C2_dom"/>
</dbReference>
<dbReference type="InterPro" id="IPR035892">
    <property type="entry name" value="C2_domain_sf"/>
</dbReference>
<dbReference type="InterPro" id="IPR011009">
    <property type="entry name" value="Kinase-like_dom_sf"/>
</dbReference>
<dbReference type="InterPro" id="IPR017892">
    <property type="entry name" value="Pkinase_C"/>
</dbReference>
<dbReference type="InterPro" id="IPR000719">
    <property type="entry name" value="Prot_kinase_dom"/>
</dbReference>
<dbReference type="InterPro" id="IPR017441">
    <property type="entry name" value="Protein_kinase_ATP_BS"/>
</dbReference>
<dbReference type="InterPro" id="IPR008271">
    <property type="entry name" value="Ser/Thr_kinase_AS"/>
</dbReference>
<dbReference type="PANTHER" id="PTHR24351">
    <property type="entry name" value="RIBOSOMAL PROTEIN S6 KINASE"/>
    <property type="match status" value="1"/>
</dbReference>
<dbReference type="Pfam" id="PF00069">
    <property type="entry name" value="Pkinase"/>
    <property type="match status" value="1"/>
</dbReference>
<dbReference type="Pfam" id="PF00433">
    <property type="entry name" value="Pkinase_C"/>
    <property type="match status" value="1"/>
</dbReference>
<dbReference type="SMART" id="SM00133">
    <property type="entry name" value="S_TK_X"/>
    <property type="match status" value="1"/>
</dbReference>
<dbReference type="SMART" id="SM00220">
    <property type="entry name" value="S_TKc"/>
    <property type="match status" value="1"/>
</dbReference>
<dbReference type="SUPFAM" id="SSF49562">
    <property type="entry name" value="C2 domain (Calcium/lipid-binding domain, CaLB)"/>
    <property type="match status" value="1"/>
</dbReference>
<dbReference type="SUPFAM" id="SSF56112">
    <property type="entry name" value="Protein kinase-like (PK-like)"/>
    <property type="match status" value="1"/>
</dbReference>
<dbReference type="PROSITE" id="PS51285">
    <property type="entry name" value="AGC_KINASE_CTER"/>
    <property type="match status" value="1"/>
</dbReference>
<dbReference type="PROSITE" id="PS50004">
    <property type="entry name" value="C2"/>
    <property type="match status" value="1"/>
</dbReference>
<dbReference type="PROSITE" id="PS00107">
    <property type="entry name" value="PROTEIN_KINASE_ATP"/>
    <property type="match status" value="1"/>
</dbReference>
<dbReference type="PROSITE" id="PS50011">
    <property type="entry name" value="PROTEIN_KINASE_DOM"/>
    <property type="match status" value="1"/>
</dbReference>
<dbReference type="PROSITE" id="PS00108">
    <property type="entry name" value="PROTEIN_KINASE_ST"/>
    <property type="match status" value="1"/>
</dbReference>
<organism>
    <name type="scientific">Schizosaccharomyces pombe (strain 972 / ATCC 24843)</name>
    <name type="common">Fission yeast</name>
    <dbReference type="NCBI Taxonomy" id="284812"/>
    <lineage>
        <taxon>Eukaryota</taxon>
        <taxon>Fungi</taxon>
        <taxon>Dikarya</taxon>
        <taxon>Ascomycota</taxon>
        <taxon>Taphrinomycotina</taxon>
        <taxon>Schizosaccharomycetes</taxon>
        <taxon>Schizosaccharomycetales</taxon>
        <taxon>Schizosaccharomycetaceae</taxon>
        <taxon>Schizosaccharomyces</taxon>
    </lineage>
</organism>
<sequence length="569" mass="63770">MSWKLTKKLKETHLASAIGLNSGGSSFTRGLKNSTLSSTSSRKSSDEKSRKSSEDKRSPQSTVVQPGLLQVTIIEARNLKLPSGHVPANYGVSIDNSLLAPPLSNGSGHARSRSHAWWLPYIVVEFDKNEILVDALNTASLENPCWDYQATFDVSRYSKLSLNIYLRSSSSRSRNGMGNDAFLGGIKLSPSFIVNKLTDEWVPLHGGSGELRVQMLYKPNQSTPLTIDAFELLKVVGKGSFGKVMQVRKRDTSRIYALKTMKKAHIVSRSEVDHTLAERTVLAQVNNPFIVPLKFSFQSPGKLYLVLAFVNGGELFHHLQREGCFDTYRAKFYIAELLVALECLHEFNVIYRDLKPENILLDYTGHIALCDFGLCKLNMAKTDRTNTFCGTPEYLAPELLLGHGYTKVVDWWTLGVLLYEMITGLPPFYDENINEMYRKILQDPLRFPDNIDEKAKDLLSGLLTRAPEKRLGSGGAQEIKNHPFFDDIDWKKLCAKKIQPPFKPSVESAIDTSNFDSEFTSEIPMDSVVADSHLSETVQQRFANWSYQRPTTIDTSDDINTIAPGSVIR</sequence>
<name>GAD8_SCHPO</name>
<keyword id="KW-0067">ATP-binding</keyword>
<keyword id="KW-0418">Kinase</keyword>
<keyword id="KW-0547">Nucleotide-binding</keyword>
<keyword id="KW-0597">Phosphoprotein</keyword>
<keyword id="KW-1185">Reference proteome</keyword>
<keyword id="KW-0723">Serine/threonine-protein kinase</keyword>
<keyword id="KW-0808">Transferase</keyword>
<reference key="1">
    <citation type="journal article" date="2002" name="Nature">
        <title>The genome sequence of Schizosaccharomyces pombe.</title>
        <authorList>
            <person name="Wood V."/>
            <person name="Gwilliam R."/>
            <person name="Rajandream M.A."/>
            <person name="Lyne M.H."/>
            <person name="Lyne R."/>
            <person name="Stewart A."/>
            <person name="Sgouros J.G."/>
            <person name="Peat N."/>
            <person name="Hayles J."/>
            <person name="Baker S.G."/>
            <person name="Basham D."/>
            <person name="Bowman S."/>
            <person name="Brooks K."/>
            <person name="Brown D."/>
            <person name="Brown S."/>
            <person name="Chillingworth T."/>
            <person name="Churcher C.M."/>
            <person name="Collins M."/>
            <person name="Connor R."/>
            <person name="Cronin A."/>
            <person name="Davis P."/>
            <person name="Feltwell T."/>
            <person name="Fraser A."/>
            <person name="Gentles S."/>
            <person name="Goble A."/>
            <person name="Hamlin N."/>
            <person name="Harris D.E."/>
            <person name="Hidalgo J."/>
            <person name="Hodgson G."/>
            <person name="Holroyd S."/>
            <person name="Hornsby T."/>
            <person name="Howarth S."/>
            <person name="Huckle E.J."/>
            <person name="Hunt S."/>
            <person name="Jagels K."/>
            <person name="James K.D."/>
            <person name="Jones L."/>
            <person name="Jones M."/>
            <person name="Leather S."/>
            <person name="McDonald S."/>
            <person name="McLean J."/>
            <person name="Mooney P."/>
            <person name="Moule S."/>
            <person name="Mungall K.L."/>
            <person name="Murphy L.D."/>
            <person name="Niblett D."/>
            <person name="Odell C."/>
            <person name="Oliver K."/>
            <person name="O'Neil S."/>
            <person name="Pearson D."/>
            <person name="Quail M.A."/>
            <person name="Rabbinowitsch E."/>
            <person name="Rutherford K.M."/>
            <person name="Rutter S."/>
            <person name="Saunders D."/>
            <person name="Seeger K."/>
            <person name="Sharp S."/>
            <person name="Skelton J."/>
            <person name="Simmonds M.N."/>
            <person name="Squares R."/>
            <person name="Squares S."/>
            <person name="Stevens K."/>
            <person name="Taylor K."/>
            <person name="Taylor R.G."/>
            <person name="Tivey A."/>
            <person name="Walsh S.V."/>
            <person name="Warren T."/>
            <person name="Whitehead S."/>
            <person name="Woodward J.R."/>
            <person name="Volckaert G."/>
            <person name="Aert R."/>
            <person name="Robben J."/>
            <person name="Grymonprez B."/>
            <person name="Weltjens I."/>
            <person name="Vanstreels E."/>
            <person name="Rieger M."/>
            <person name="Schaefer M."/>
            <person name="Mueller-Auer S."/>
            <person name="Gabel C."/>
            <person name="Fuchs M."/>
            <person name="Duesterhoeft A."/>
            <person name="Fritzc C."/>
            <person name="Holzer E."/>
            <person name="Moestl D."/>
            <person name="Hilbert H."/>
            <person name="Borzym K."/>
            <person name="Langer I."/>
            <person name="Beck A."/>
            <person name="Lehrach H."/>
            <person name="Reinhardt R."/>
            <person name="Pohl T.M."/>
            <person name="Eger P."/>
            <person name="Zimmermann W."/>
            <person name="Wedler H."/>
            <person name="Wambutt R."/>
            <person name="Purnelle B."/>
            <person name="Goffeau A."/>
            <person name="Cadieu E."/>
            <person name="Dreano S."/>
            <person name="Gloux S."/>
            <person name="Lelaure V."/>
            <person name="Mottier S."/>
            <person name="Galibert F."/>
            <person name="Aves S.J."/>
            <person name="Xiang Z."/>
            <person name="Hunt C."/>
            <person name="Moore K."/>
            <person name="Hurst S.M."/>
            <person name="Lucas M."/>
            <person name="Rochet M."/>
            <person name="Gaillardin C."/>
            <person name="Tallada V.A."/>
            <person name="Garzon A."/>
            <person name="Thode G."/>
            <person name="Daga R.R."/>
            <person name="Cruzado L."/>
            <person name="Jimenez J."/>
            <person name="Sanchez M."/>
            <person name="del Rey F."/>
            <person name="Benito J."/>
            <person name="Dominguez A."/>
            <person name="Revuelta J.L."/>
            <person name="Moreno S."/>
            <person name="Armstrong J."/>
            <person name="Forsburg S.L."/>
            <person name="Cerutti L."/>
            <person name="Lowe T."/>
            <person name="McCombie W.R."/>
            <person name="Paulsen I."/>
            <person name="Potashkin J."/>
            <person name="Shpakovski G.V."/>
            <person name="Ussery D."/>
            <person name="Barrell B.G."/>
            <person name="Nurse P."/>
        </authorList>
    </citation>
    <scope>NUCLEOTIDE SEQUENCE [LARGE SCALE GENOMIC DNA]</scope>
    <source>
        <strain>972 / ATCC 24843</strain>
    </source>
</reference>
<reference key="2">
    <citation type="journal article" date="2003" name="EMBO J.">
        <title>Schizosaccharomyces pombe AGC family kinase Gad8p forms a conserved signaling module with TOR and PDK1-like kinases.</title>
        <authorList>
            <person name="Matsuo T."/>
            <person name="Kubo Y."/>
            <person name="Watanabe Y."/>
            <person name="Yamamoto M."/>
        </authorList>
    </citation>
    <scope>FUNCTION</scope>
    <scope>CATALYTIC ACTIVITY</scope>
    <scope>PHOSPHORYLATION AT THR-387; SER-527 AND SER-546</scope>
    <scope>MUTAGENESIS OF THR-387; SER-527 AND SER-546</scope>
</reference>
<reference key="3">
    <citation type="journal article" date="2017" name="Elife">
        <title>Substrate specificity of TOR complex 2 is determined by a ubiquitin-fold domain of the Sin1 subunit.</title>
        <authorList>
            <person name="Tatebe H."/>
            <person name="Murayama S."/>
            <person name="Yonekura T."/>
            <person name="Hatano T."/>
            <person name="Richter D."/>
            <person name="Furuya T."/>
            <person name="Kataoka S."/>
            <person name="Furuita K."/>
            <person name="Kojima C."/>
            <person name="Shiozaki K."/>
        </authorList>
    </citation>
    <scope>PHOSPHORYLATION</scope>
</reference>
<proteinExistence type="evidence at protein level"/>
<gene>
    <name evidence="8" type="primary">gad8</name>
    <name evidence="10" type="ORF">SPCC24B10.07</name>
</gene>
<protein>
    <recommendedName>
        <fullName evidence="8">Serine/threonine-protein kinase gad8</fullName>
        <ecNumber evidence="6">2.7.11.1</ecNumber>
    </recommendedName>
</protein>